<comment type="function">
    <text evidence="1">Dual-specificity methyltransferase that catalyzes the formation of 5-methyluridine at position 54 (m5U54) in all tRNAs, and that of position 341 (m5U341) in tmRNA (transfer-mRNA).</text>
</comment>
<comment type="catalytic activity">
    <reaction evidence="1">
        <text>uridine(54) in tRNA + S-adenosyl-L-methionine = 5-methyluridine(54) in tRNA + S-adenosyl-L-homocysteine + H(+)</text>
        <dbReference type="Rhea" id="RHEA:42712"/>
        <dbReference type="Rhea" id="RHEA-COMP:10167"/>
        <dbReference type="Rhea" id="RHEA-COMP:10193"/>
        <dbReference type="ChEBI" id="CHEBI:15378"/>
        <dbReference type="ChEBI" id="CHEBI:57856"/>
        <dbReference type="ChEBI" id="CHEBI:59789"/>
        <dbReference type="ChEBI" id="CHEBI:65315"/>
        <dbReference type="ChEBI" id="CHEBI:74447"/>
        <dbReference type="EC" id="2.1.1.35"/>
    </reaction>
</comment>
<comment type="catalytic activity">
    <reaction evidence="1">
        <text>uridine(341) in tmRNA + S-adenosyl-L-methionine = 5-methyluridine(341) in tmRNA + S-adenosyl-L-homocysteine + H(+)</text>
        <dbReference type="Rhea" id="RHEA:43612"/>
        <dbReference type="Rhea" id="RHEA-COMP:10630"/>
        <dbReference type="Rhea" id="RHEA-COMP:10631"/>
        <dbReference type="ChEBI" id="CHEBI:15378"/>
        <dbReference type="ChEBI" id="CHEBI:57856"/>
        <dbReference type="ChEBI" id="CHEBI:59789"/>
        <dbReference type="ChEBI" id="CHEBI:65315"/>
        <dbReference type="ChEBI" id="CHEBI:74447"/>
    </reaction>
</comment>
<comment type="similarity">
    <text evidence="1">Belongs to the class I-like SAM-binding methyltransferase superfamily. RNA M5U methyltransferase family. TrmA subfamily.</text>
</comment>
<evidence type="ECO:0000255" key="1">
    <source>
        <dbReference type="HAMAP-Rule" id="MF_01011"/>
    </source>
</evidence>
<keyword id="KW-0489">Methyltransferase</keyword>
<keyword id="KW-0949">S-adenosyl-L-methionine</keyword>
<keyword id="KW-0808">Transferase</keyword>
<keyword id="KW-0819">tRNA processing</keyword>
<protein>
    <recommendedName>
        <fullName evidence="1">tRNA/tmRNA (uracil-C(5))-methyltransferase</fullName>
        <ecNumber evidence="1">2.1.1.-</ecNumber>
        <ecNumber evidence="1">2.1.1.35</ecNumber>
    </recommendedName>
    <alternativeName>
        <fullName evidence="1">tRNA (uracil(54)-C(5))-methyltransferase</fullName>
    </alternativeName>
    <alternativeName>
        <fullName evidence="1">tRNA(m5U54)-methyltransferase</fullName>
        <shortName evidence="1">RUMT</shortName>
    </alternativeName>
    <alternativeName>
        <fullName evidence="1">tmRNA (uracil(341)-C(5))-methyltransferase</fullName>
    </alternativeName>
</protein>
<sequence length="366" mass="41936">MTPEHLPTEQYEAQLAEKVVRLQSMMAPFSDLVPEVFRSPVSHYRMRAEFRIWHDGDDLYHIIFDQQTKSRIRVDSFPAASELINQLMTAMIAGVRNNPILRHKLFQIDYLTTLSNQAVVSLLYHKKLDDEWRQQAEALRDALRAQNLNVHLIGRATKTKIALDQDYIDERLPIAGKEMIYRQVENSFTQPNAAMNIQMLEWALDVTKGSKGDLLELYCGNGNFSLALARNFDRVLATEIAKPSVAAAQYNIAANHIDNVQIIRMAAEEFTQAMNGVREFNRLQGIDLKSYQCETIFVDPPRSGLDSETEKMVQAYPRILYISCNPETLCKNLETLSQTHKVERLALFDQFPYTHHMECGVLLTAK</sequence>
<organism>
    <name type="scientific">Escherichia coli (strain UTI89 / UPEC)</name>
    <dbReference type="NCBI Taxonomy" id="364106"/>
    <lineage>
        <taxon>Bacteria</taxon>
        <taxon>Pseudomonadati</taxon>
        <taxon>Pseudomonadota</taxon>
        <taxon>Gammaproteobacteria</taxon>
        <taxon>Enterobacterales</taxon>
        <taxon>Enterobacteriaceae</taxon>
        <taxon>Escherichia</taxon>
    </lineage>
</organism>
<gene>
    <name evidence="1" type="primary">trmA</name>
    <name type="ordered locus">UTI89_C4560</name>
</gene>
<dbReference type="EC" id="2.1.1.-" evidence="1"/>
<dbReference type="EC" id="2.1.1.35" evidence="1"/>
<dbReference type="EMBL" id="CP000243">
    <property type="protein sequence ID" value="ABE09972.1"/>
    <property type="molecule type" value="Genomic_DNA"/>
</dbReference>
<dbReference type="RefSeq" id="WP_000187001.1">
    <property type="nucleotide sequence ID" value="NZ_CP064825.1"/>
</dbReference>
<dbReference type="SMR" id="Q1R3U2"/>
<dbReference type="KEGG" id="eci:UTI89_C4560"/>
<dbReference type="HOGENOM" id="CLU_043022_0_0_6"/>
<dbReference type="Proteomes" id="UP000001952">
    <property type="component" value="Chromosome"/>
</dbReference>
<dbReference type="GO" id="GO:0005829">
    <property type="term" value="C:cytosol"/>
    <property type="evidence" value="ECO:0007669"/>
    <property type="project" value="TreeGrafter"/>
</dbReference>
<dbReference type="GO" id="GO:0019843">
    <property type="term" value="F:rRNA binding"/>
    <property type="evidence" value="ECO:0007669"/>
    <property type="project" value="TreeGrafter"/>
</dbReference>
<dbReference type="GO" id="GO:0030697">
    <property type="term" value="F:tRNA (uracil(54)-C5)-methyltransferase activity, S-adenosyl methionine-dependent"/>
    <property type="evidence" value="ECO:0007669"/>
    <property type="project" value="UniProtKB-UniRule"/>
</dbReference>
<dbReference type="GO" id="GO:0000049">
    <property type="term" value="F:tRNA binding"/>
    <property type="evidence" value="ECO:0007669"/>
    <property type="project" value="TreeGrafter"/>
</dbReference>
<dbReference type="GO" id="GO:0030488">
    <property type="term" value="P:tRNA methylation"/>
    <property type="evidence" value="ECO:0007669"/>
    <property type="project" value="UniProtKB-UniRule"/>
</dbReference>
<dbReference type="CDD" id="cd02440">
    <property type="entry name" value="AdoMet_MTases"/>
    <property type="match status" value="1"/>
</dbReference>
<dbReference type="FunFam" id="2.40.50.1070:FF:000001">
    <property type="entry name" value="tRNA/tmRNA (uracil-C(5))-methyltransferase"/>
    <property type="match status" value="1"/>
</dbReference>
<dbReference type="FunFam" id="3.40.50.150:FF:000012">
    <property type="entry name" value="tRNA/tmRNA (uracil-C(5))-methyltransferase"/>
    <property type="match status" value="1"/>
</dbReference>
<dbReference type="Gene3D" id="2.40.50.1070">
    <property type="match status" value="1"/>
</dbReference>
<dbReference type="Gene3D" id="3.40.50.150">
    <property type="entry name" value="Vaccinia Virus protein VP39"/>
    <property type="match status" value="1"/>
</dbReference>
<dbReference type="HAMAP" id="MF_01011">
    <property type="entry name" value="RNA_methyltr_TrmA"/>
    <property type="match status" value="1"/>
</dbReference>
<dbReference type="InterPro" id="IPR030390">
    <property type="entry name" value="MeTrfase_TrmA_AS"/>
</dbReference>
<dbReference type="InterPro" id="IPR030391">
    <property type="entry name" value="MeTrfase_TrmA_CS"/>
</dbReference>
<dbReference type="InterPro" id="IPR029063">
    <property type="entry name" value="SAM-dependent_MTases_sf"/>
</dbReference>
<dbReference type="InterPro" id="IPR011869">
    <property type="entry name" value="TrmA_MeTrfase"/>
</dbReference>
<dbReference type="InterPro" id="IPR010280">
    <property type="entry name" value="U5_MeTrfase_fam"/>
</dbReference>
<dbReference type="NCBIfam" id="TIGR02143">
    <property type="entry name" value="trmA_only"/>
    <property type="match status" value="1"/>
</dbReference>
<dbReference type="PANTHER" id="PTHR47790">
    <property type="entry name" value="TRNA/TMRNA (URACIL-C(5))-METHYLTRANSFERASE"/>
    <property type="match status" value="1"/>
</dbReference>
<dbReference type="PANTHER" id="PTHR47790:SF2">
    <property type="entry name" value="TRNA_TMRNA (URACIL-C(5))-METHYLTRANSFERASE"/>
    <property type="match status" value="1"/>
</dbReference>
<dbReference type="Pfam" id="PF05958">
    <property type="entry name" value="tRNA_U5-meth_tr"/>
    <property type="match status" value="1"/>
</dbReference>
<dbReference type="SUPFAM" id="SSF53335">
    <property type="entry name" value="S-adenosyl-L-methionine-dependent methyltransferases"/>
    <property type="match status" value="1"/>
</dbReference>
<dbReference type="PROSITE" id="PS51687">
    <property type="entry name" value="SAM_MT_RNA_M5U"/>
    <property type="match status" value="1"/>
</dbReference>
<dbReference type="PROSITE" id="PS01230">
    <property type="entry name" value="TRMA_1"/>
    <property type="match status" value="1"/>
</dbReference>
<dbReference type="PROSITE" id="PS01231">
    <property type="entry name" value="TRMA_2"/>
    <property type="match status" value="1"/>
</dbReference>
<name>TRMA_ECOUT</name>
<proteinExistence type="inferred from homology"/>
<feature type="chain" id="PRO_0000281441" description="tRNA/tmRNA (uracil-C(5))-methyltransferase">
    <location>
        <begin position="1"/>
        <end position="366"/>
    </location>
</feature>
<feature type="active site" description="Nucleophile" evidence="1">
    <location>
        <position position="324"/>
    </location>
</feature>
<feature type="active site" description="Proton acceptor" evidence="1">
    <location>
        <position position="358"/>
    </location>
</feature>
<feature type="binding site" evidence="1">
    <location>
        <position position="190"/>
    </location>
    <ligand>
        <name>S-adenosyl-L-methionine</name>
        <dbReference type="ChEBI" id="CHEBI:59789"/>
    </ligand>
</feature>
<feature type="binding site" evidence="1">
    <location>
        <position position="218"/>
    </location>
    <ligand>
        <name>S-adenosyl-L-methionine</name>
        <dbReference type="ChEBI" id="CHEBI:59789"/>
    </ligand>
</feature>
<feature type="binding site" evidence="1">
    <location>
        <position position="223"/>
    </location>
    <ligand>
        <name>S-adenosyl-L-methionine</name>
        <dbReference type="ChEBI" id="CHEBI:59789"/>
    </ligand>
</feature>
<feature type="binding site" evidence="1">
    <location>
        <position position="239"/>
    </location>
    <ligand>
        <name>S-adenosyl-L-methionine</name>
        <dbReference type="ChEBI" id="CHEBI:59789"/>
    </ligand>
</feature>
<feature type="binding site" evidence="1">
    <location>
        <position position="299"/>
    </location>
    <ligand>
        <name>S-adenosyl-L-methionine</name>
        <dbReference type="ChEBI" id="CHEBI:59789"/>
    </ligand>
</feature>
<reference key="1">
    <citation type="journal article" date="2006" name="Proc. Natl. Acad. Sci. U.S.A.">
        <title>Identification of genes subject to positive selection in uropathogenic strains of Escherichia coli: a comparative genomics approach.</title>
        <authorList>
            <person name="Chen S.L."/>
            <person name="Hung C.-S."/>
            <person name="Xu J."/>
            <person name="Reigstad C.S."/>
            <person name="Magrini V."/>
            <person name="Sabo A."/>
            <person name="Blasiar D."/>
            <person name="Bieri T."/>
            <person name="Meyer R.R."/>
            <person name="Ozersky P."/>
            <person name="Armstrong J.R."/>
            <person name="Fulton R.S."/>
            <person name="Latreille J.P."/>
            <person name="Spieth J."/>
            <person name="Hooton T.M."/>
            <person name="Mardis E.R."/>
            <person name="Hultgren S.J."/>
            <person name="Gordon J.I."/>
        </authorList>
    </citation>
    <scope>NUCLEOTIDE SEQUENCE [LARGE SCALE GENOMIC DNA]</scope>
    <source>
        <strain>UTI89 / UPEC</strain>
    </source>
</reference>
<accession>Q1R3U2</accession>